<protein>
    <recommendedName>
        <fullName evidence="1">Photosystem II reaction center protein K</fullName>
        <shortName evidence="1">PSII-K</shortName>
    </recommendedName>
</protein>
<keyword id="KW-0472">Membrane</keyword>
<keyword id="KW-0602">Photosynthesis</keyword>
<keyword id="KW-0604">Photosystem II</keyword>
<keyword id="KW-0674">Reaction center</keyword>
<keyword id="KW-0793">Thylakoid</keyword>
<keyword id="KW-0812">Transmembrane</keyword>
<keyword id="KW-1133">Transmembrane helix</keyword>
<accession>B8HTR1</accession>
<feature type="propeptide" id="PRO_1000192877" evidence="1">
    <location>
        <begin position="1"/>
        <end position="8"/>
    </location>
</feature>
<feature type="chain" id="PRO_1000192878" description="Photosystem II reaction center protein K" evidence="1">
    <location>
        <begin position="9"/>
        <end position="45"/>
    </location>
</feature>
<feature type="transmembrane region" description="Helical" evidence="1">
    <location>
        <begin position="24"/>
        <end position="44"/>
    </location>
</feature>
<name>PSBK_CYAP4</name>
<reference key="1">
    <citation type="journal article" date="2011" name="MBio">
        <title>Novel metabolic attributes of the genus Cyanothece, comprising a group of unicellular nitrogen-fixing Cyanobacteria.</title>
        <authorList>
            <person name="Bandyopadhyay A."/>
            <person name="Elvitigala T."/>
            <person name="Welsh E."/>
            <person name="Stockel J."/>
            <person name="Liberton M."/>
            <person name="Min H."/>
            <person name="Sherman L.A."/>
            <person name="Pakrasi H.B."/>
        </authorList>
    </citation>
    <scope>NUCLEOTIDE SEQUENCE [LARGE SCALE GENOMIC DNA]</scope>
    <source>
        <strain>PCC 7425 / ATCC 29141</strain>
    </source>
</reference>
<gene>
    <name evidence="1" type="primary">psbK</name>
    <name type="ordered locus">Cyan7425_3824</name>
</gene>
<comment type="function">
    <text evidence="1">One of the components of the core complex of photosystem II (PSII). PSII is a light-driven water:plastoquinone oxidoreductase that uses light energy to abstract electrons from H(2)O, generating O(2) and a proton gradient subsequently used for ATP formation. It consists of a core antenna complex that captures photons, and an electron transfer chain that converts photonic excitation into a charge separation.</text>
</comment>
<comment type="subunit">
    <text evidence="1">PSII is composed of 1 copy each of membrane proteins PsbA, PsbB, PsbC, PsbD, PsbE, PsbF, PsbH, PsbI, PsbJ, PsbK, PsbL, PsbM, PsbT, PsbX, PsbY, PsbZ, Psb30/Ycf12, peripheral proteins PsbO, CyanoQ (PsbQ), PsbU, PsbV and a large number of cofactors. It forms dimeric complexes.</text>
</comment>
<comment type="subcellular location">
    <subcellularLocation>
        <location evidence="1">Cellular thylakoid membrane</location>
        <topology evidence="1">Single-pass membrane protein</topology>
    </subcellularLocation>
</comment>
<comment type="similarity">
    <text evidence="1">Belongs to the PsbK family.</text>
</comment>
<proteinExistence type="inferred from homology"/>
<sequence>MELMLLFAKLPEAYSIFDPLVDVLPVIPVLFLALAFVWQASVGFR</sequence>
<evidence type="ECO:0000255" key="1">
    <source>
        <dbReference type="HAMAP-Rule" id="MF_00441"/>
    </source>
</evidence>
<dbReference type="EMBL" id="CP001344">
    <property type="protein sequence ID" value="ACL46142.1"/>
    <property type="molecule type" value="Genomic_DNA"/>
</dbReference>
<dbReference type="SMR" id="B8HTR1"/>
<dbReference type="STRING" id="395961.Cyan7425_3824"/>
<dbReference type="KEGG" id="cyn:Cyan7425_3824"/>
<dbReference type="eggNOG" id="ENOG5032YQR">
    <property type="taxonomic scope" value="Bacteria"/>
</dbReference>
<dbReference type="HOGENOM" id="CLU_174355_0_0_3"/>
<dbReference type="GO" id="GO:0009539">
    <property type="term" value="C:photosystem II reaction center"/>
    <property type="evidence" value="ECO:0007669"/>
    <property type="project" value="InterPro"/>
</dbReference>
<dbReference type="GO" id="GO:0031676">
    <property type="term" value="C:plasma membrane-derived thylakoid membrane"/>
    <property type="evidence" value="ECO:0007669"/>
    <property type="project" value="UniProtKB-SubCell"/>
</dbReference>
<dbReference type="GO" id="GO:0015979">
    <property type="term" value="P:photosynthesis"/>
    <property type="evidence" value="ECO:0007669"/>
    <property type="project" value="UniProtKB-UniRule"/>
</dbReference>
<dbReference type="HAMAP" id="MF_00441">
    <property type="entry name" value="PSII_PsbK"/>
    <property type="match status" value="1"/>
</dbReference>
<dbReference type="InterPro" id="IPR003687">
    <property type="entry name" value="PSII_PsbK"/>
</dbReference>
<dbReference type="InterPro" id="IPR037270">
    <property type="entry name" value="PSII_PsbK_sf"/>
</dbReference>
<dbReference type="NCBIfam" id="NF002715">
    <property type="entry name" value="PRK02553.1"/>
    <property type="match status" value="1"/>
</dbReference>
<dbReference type="PANTHER" id="PTHR35325">
    <property type="match status" value="1"/>
</dbReference>
<dbReference type="PANTHER" id="PTHR35325:SF1">
    <property type="entry name" value="PHOTOSYSTEM II REACTION CENTER PROTEIN K"/>
    <property type="match status" value="1"/>
</dbReference>
<dbReference type="Pfam" id="PF02533">
    <property type="entry name" value="PsbK"/>
    <property type="match status" value="1"/>
</dbReference>
<dbReference type="SUPFAM" id="SSF161037">
    <property type="entry name" value="Photosystem II reaction center protein K, PsbK"/>
    <property type="match status" value="1"/>
</dbReference>
<organism>
    <name type="scientific">Cyanothece sp. (strain PCC 7425 / ATCC 29141)</name>
    <dbReference type="NCBI Taxonomy" id="395961"/>
    <lineage>
        <taxon>Bacteria</taxon>
        <taxon>Bacillati</taxon>
        <taxon>Cyanobacteriota</taxon>
        <taxon>Cyanophyceae</taxon>
        <taxon>Gomontiellales</taxon>
        <taxon>Cyanothecaceae</taxon>
        <taxon>Cyanothece</taxon>
    </lineage>
</organism>